<gene>
    <name evidence="1" type="primary">tgt</name>
    <name type="ordered locus">ECA1120</name>
</gene>
<sequence length="381" mass="43365">MKYELQTTDGRARRGRLIFERGVVETPAFMPVGTYGTVKGMTPEEVKETGAQILLGNTFHLWLRPGQEIMKLHGDLHDFMNWHGPILTDSGGFQVFSLGDIRKITEQGVHFRNPINGDSIFLSPEKSMEIQNDLGSDIVMIFDECTPYPADWDYAKRSMEMSLRWAKRSRQRFDELENKNALFGIIQGSVYEDLRDVSVKGLVDIGFDGYAVGGLAVGEPKEDMHRILEHVCPQIPEDKPRYLMGVGKPEDLVEGVRRGVDMFDCVMPTRNARNGHLFVTDGVVKIRNAKHKDDVSSLDEHCDCYTCRNYSRAYLHHLDRCNEILGARLNTIHNLRYYQRLMAGLRQAIEEGKLELFVVDFYQRIGKPIPPLAEKDVAASN</sequence>
<name>TGT_PECAS</name>
<proteinExistence type="inferred from homology"/>
<accession>Q6D855</accession>
<dbReference type="EC" id="2.4.2.29" evidence="1"/>
<dbReference type="EMBL" id="BX950851">
    <property type="protein sequence ID" value="CAG74030.1"/>
    <property type="molecule type" value="Genomic_DNA"/>
</dbReference>
<dbReference type="RefSeq" id="WP_011092714.1">
    <property type="nucleotide sequence ID" value="NC_004547.2"/>
</dbReference>
<dbReference type="SMR" id="Q6D855"/>
<dbReference type="STRING" id="218491.ECA1120"/>
<dbReference type="GeneID" id="57207934"/>
<dbReference type="KEGG" id="eca:ECA1120"/>
<dbReference type="PATRIC" id="fig|218491.5.peg.1129"/>
<dbReference type="eggNOG" id="COG0343">
    <property type="taxonomic scope" value="Bacteria"/>
</dbReference>
<dbReference type="HOGENOM" id="CLU_022060_0_1_6"/>
<dbReference type="OrthoDB" id="9805417at2"/>
<dbReference type="UniPathway" id="UPA00392"/>
<dbReference type="Proteomes" id="UP000007966">
    <property type="component" value="Chromosome"/>
</dbReference>
<dbReference type="GO" id="GO:0005829">
    <property type="term" value="C:cytosol"/>
    <property type="evidence" value="ECO:0007669"/>
    <property type="project" value="TreeGrafter"/>
</dbReference>
<dbReference type="GO" id="GO:0046872">
    <property type="term" value="F:metal ion binding"/>
    <property type="evidence" value="ECO:0007669"/>
    <property type="project" value="UniProtKB-KW"/>
</dbReference>
<dbReference type="GO" id="GO:0008479">
    <property type="term" value="F:tRNA-guanosine(34) queuine transglycosylase activity"/>
    <property type="evidence" value="ECO:0007669"/>
    <property type="project" value="UniProtKB-UniRule"/>
</dbReference>
<dbReference type="GO" id="GO:0008616">
    <property type="term" value="P:queuosine biosynthetic process"/>
    <property type="evidence" value="ECO:0007669"/>
    <property type="project" value="UniProtKB-UniRule"/>
</dbReference>
<dbReference type="GO" id="GO:0002099">
    <property type="term" value="P:tRNA wobble guanine modification"/>
    <property type="evidence" value="ECO:0007669"/>
    <property type="project" value="TreeGrafter"/>
</dbReference>
<dbReference type="GO" id="GO:0101030">
    <property type="term" value="P:tRNA-guanine transglycosylation"/>
    <property type="evidence" value="ECO:0007669"/>
    <property type="project" value="InterPro"/>
</dbReference>
<dbReference type="FunFam" id="3.20.20.105:FF:000001">
    <property type="entry name" value="Queuine tRNA-ribosyltransferase"/>
    <property type="match status" value="1"/>
</dbReference>
<dbReference type="Gene3D" id="3.20.20.105">
    <property type="entry name" value="Queuine tRNA-ribosyltransferase-like"/>
    <property type="match status" value="1"/>
</dbReference>
<dbReference type="HAMAP" id="MF_00168">
    <property type="entry name" value="Q_tRNA_Tgt"/>
    <property type="match status" value="1"/>
</dbReference>
<dbReference type="InterPro" id="IPR050076">
    <property type="entry name" value="ArchSynthase1/Queuine_TRR"/>
</dbReference>
<dbReference type="InterPro" id="IPR004803">
    <property type="entry name" value="TGT"/>
</dbReference>
<dbReference type="InterPro" id="IPR036511">
    <property type="entry name" value="TGT-like_sf"/>
</dbReference>
<dbReference type="InterPro" id="IPR002616">
    <property type="entry name" value="tRNA_ribo_trans-like"/>
</dbReference>
<dbReference type="NCBIfam" id="TIGR00430">
    <property type="entry name" value="Q_tRNA_tgt"/>
    <property type="match status" value="1"/>
</dbReference>
<dbReference type="NCBIfam" id="TIGR00449">
    <property type="entry name" value="tgt_general"/>
    <property type="match status" value="1"/>
</dbReference>
<dbReference type="PANTHER" id="PTHR46499">
    <property type="entry name" value="QUEUINE TRNA-RIBOSYLTRANSFERASE"/>
    <property type="match status" value="1"/>
</dbReference>
<dbReference type="PANTHER" id="PTHR46499:SF1">
    <property type="entry name" value="QUEUINE TRNA-RIBOSYLTRANSFERASE"/>
    <property type="match status" value="1"/>
</dbReference>
<dbReference type="Pfam" id="PF01702">
    <property type="entry name" value="TGT"/>
    <property type="match status" value="1"/>
</dbReference>
<dbReference type="SUPFAM" id="SSF51713">
    <property type="entry name" value="tRNA-guanine transglycosylase"/>
    <property type="match status" value="1"/>
</dbReference>
<reference key="1">
    <citation type="journal article" date="2004" name="Proc. Natl. Acad. Sci. U.S.A.">
        <title>Genome sequence of the enterobacterial phytopathogen Erwinia carotovora subsp. atroseptica and characterization of virulence factors.</title>
        <authorList>
            <person name="Bell K.S."/>
            <person name="Sebaihia M."/>
            <person name="Pritchard L."/>
            <person name="Holden M.T.G."/>
            <person name="Hyman L.J."/>
            <person name="Holeva M.C."/>
            <person name="Thomson N.R."/>
            <person name="Bentley S.D."/>
            <person name="Churcher L.J.C."/>
            <person name="Mungall K."/>
            <person name="Atkin R."/>
            <person name="Bason N."/>
            <person name="Brooks K."/>
            <person name="Chillingworth T."/>
            <person name="Clark K."/>
            <person name="Doggett J."/>
            <person name="Fraser A."/>
            <person name="Hance Z."/>
            <person name="Hauser H."/>
            <person name="Jagels K."/>
            <person name="Moule S."/>
            <person name="Norbertczak H."/>
            <person name="Ormond D."/>
            <person name="Price C."/>
            <person name="Quail M.A."/>
            <person name="Sanders M."/>
            <person name="Walker D."/>
            <person name="Whitehead S."/>
            <person name="Salmond G.P.C."/>
            <person name="Birch P.R.J."/>
            <person name="Parkhill J."/>
            <person name="Toth I.K."/>
        </authorList>
    </citation>
    <scope>NUCLEOTIDE SEQUENCE [LARGE SCALE GENOMIC DNA]</scope>
    <source>
        <strain>SCRI 1043 / ATCC BAA-672</strain>
    </source>
</reference>
<comment type="function">
    <text evidence="1">Catalyzes the base-exchange of a guanine (G) residue with the queuine precursor 7-aminomethyl-7-deazaguanine (PreQ1) at position 34 (anticodon wobble position) in tRNAs with GU(N) anticodons (tRNA-Asp, -Asn, -His and -Tyr). Catalysis occurs through a double-displacement mechanism. The nucleophile active site attacks the C1' of nucleotide 34 to detach the guanine base from the RNA, forming a covalent enzyme-RNA intermediate. The proton acceptor active site deprotonates the incoming PreQ1, allowing a nucleophilic attack on the C1' of the ribose to form the product. After dissociation, two additional enzymatic reactions on the tRNA convert PreQ1 to queuine (Q), resulting in the hypermodified nucleoside queuosine (7-(((4,5-cis-dihydroxy-2-cyclopenten-1-yl)amino)methyl)-7-deazaguanosine).</text>
</comment>
<comment type="catalytic activity">
    <reaction evidence="1">
        <text>7-aminomethyl-7-carbaguanine + guanosine(34) in tRNA = 7-aminomethyl-7-carbaguanosine(34) in tRNA + guanine</text>
        <dbReference type="Rhea" id="RHEA:24104"/>
        <dbReference type="Rhea" id="RHEA-COMP:10341"/>
        <dbReference type="Rhea" id="RHEA-COMP:10342"/>
        <dbReference type="ChEBI" id="CHEBI:16235"/>
        <dbReference type="ChEBI" id="CHEBI:58703"/>
        <dbReference type="ChEBI" id="CHEBI:74269"/>
        <dbReference type="ChEBI" id="CHEBI:82833"/>
        <dbReference type="EC" id="2.4.2.29"/>
    </reaction>
</comment>
<comment type="cofactor">
    <cofactor evidence="1">
        <name>Zn(2+)</name>
        <dbReference type="ChEBI" id="CHEBI:29105"/>
    </cofactor>
    <text evidence="1">Binds 1 zinc ion per subunit.</text>
</comment>
<comment type="pathway">
    <text evidence="1">tRNA modification; tRNA-queuosine biosynthesis.</text>
</comment>
<comment type="subunit">
    <text evidence="1">Homodimer. Within each dimer, one monomer is responsible for RNA recognition and catalysis, while the other monomer binds to the replacement base PreQ1.</text>
</comment>
<comment type="similarity">
    <text evidence="1">Belongs to the queuine tRNA-ribosyltransferase family.</text>
</comment>
<keyword id="KW-0328">Glycosyltransferase</keyword>
<keyword id="KW-0479">Metal-binding</keyword>
<keyword id="KW-0671">Queuosine biosynthesis</keyword>
<keyword id="KW-1185">Reference proteome</keyword>
<keyword id="KW-0808">Transferase</keyword>
<keyword id="KW-0819">tRNA processing</keyword>
<keyword id="KW-0862">Zinc</keyword>
<feature type="chain" id="PRO_0000135475" description="Queuine tRNA-ribosyltransferase">
    <location>
        <begin position="1"/>
        <end position="381"/>
    </location>
</feature>
<feature type="region of interest" description="RNA binding" evidence="1">
    <location>
        <begin position="245"/>
        <end position="251"/>
    </location>
</feature>
<feature type="region of interest" description="RNA binding; important for wobble base 34 recognition" evidence="1">
    <location>
        <begin position="269"/>
        <end position="273"/>
    </location>
</feature>
<feature type="active site" description="Proton acceptor" evidence="1">
    <location>
        <position position="89"/>
    </location>
</feature>
<feature type="active site" description="Nucleophile" evidence="1">
    <location>
        <position position="264"/>
    </location>
</feature>
<feature type="binding site" evidence="1">
    <location>
        <begin position="89"/>
        <end position="93"/>
    </location>
    <ligand>
        <name>substrate</name>
    </ligand>
</feature>
<feature type="binding site" evidence="1">
    <location>
        <position position="143"/>
    </location>
    <ligand>
        <name>substrate</name>
    </ligand>
</feature>
<feature type="binding site" evidence="1">
    <location>
        <position position="187"/>
    </location>
    <ligand>
        <name>substrate</name>
    </ligand>
</feature>
<feature type="binding site" evidence="1">
    <location>
        <position position="214"/>
    </location>
    <ligand>
        <name>substrate</name>
    </ligand>
</feature>
<feature type="binding site" evidence="1">
    <location>
        <position position="302"/>
    </location>
    <ligand>
        <name>Zn(2+)</name>
        <dbReference type="ChEBI" id="CHEBI:29105"/>
    </ligand>
</feature>
<feature type="binding site" evidence="1">
    <location>
        <position position="304"/>
    </location>
    <ligand>
        <name>Zn(2+)</name>
        <dbReference type="ChEBI" id="CHEBI:29105"/>
    </ligand>
</feature>
<feature type="binding site" evidence="1">
    <location>
        <position position="307"/>
    </location>
    <ligand>
        <name>Zn(2+)</name>
        <dbReference type="ChEBI" id="CHEBI:29105"/>
    </ligand>
</feature>
<feature type="binding site" evidence="1">
    <location>
        <position position="333"/>
    </location>
    <ligand>
        <name>Zn(2+)</name>
        <dbReference type="ChEBI" id="CHEBI:29105"/>
    </ligand>
</feature>
<protein>
    <recommendedName>
        <fullName evidence="1">Queuine tRNA-ribosyltransferase</fullName>
        <ecNumber evidence="1">2.4.2.29</ecNumber>
    </recommendedName>
    <alternativeName>
        <fullName evidence="1">Guanine insertion enzyme</fullName>
    </alternativeName>
    <alternativeName>
        <fullName evidence="1">tRNA-guanine transglycosylase</fullName>
    </alternativeName>
</protein>
<organism>
    <name type="scientific">Pectobacterium atrosepticum (strain SCRI 1043 / ATCC BAA-672)</name>
    <name type="common">Erwinia carotovora subsp. atroseptica</name>
    <dbReference type="NCBI Taxonomy" id="218491"/>
    <lineage>
        <taxon>Bacteria</taxon>
        <taxon>Pseudomonadati</taxon>
        <taxon>Pseudomonadota</taxon>
        <taxon>Gammaproteobacteria</taxon>
        <taxon>Enterobacterales</taxon>
        <taxon>Pectobacteriaceae</taxon>
        <taxon>Pectobacterium</taxon>
    </lineage>
</organism>
<evidence type="ECO:0000255" key="1">
    <source>
        <dbReference type="HAMAP-Rule" id="MF_00168"/>
    </source>
</evidence>